<accession>Q9MUP2</accession>
<feature type="chain" id="PRO_0000146408" description="Small ribosomal subunit protein uS12c">
    <location>
        <begin position="1"/>
        <end position="122"/>
    </location>
</feature>
<evidence type="ECO:0000250" key="1"/>
<evidence type="ECO:0000305" key="2"/>
<reference key="1">
    <citation type="journal article" date="2000" name="Nature">
        <title>Ancestral chloroplast genome in Mesostigma viride reveals an early branch of green plant evolution.</title>
        <authorList>
            <person name="Lemieux C."/>
            <person name="Otis C."/>
            <person name="Turmel M."/>
        </authorList>
    </citation>
    <scope>NUCLEOTIDE SEQUENCE [LARGE SCALE GENOMIC DNA]</scope>
    <source>
        <strain>NIES-296 / KY-14 / CCMP 2046</strain>
    </source>
</reference>
<protein>
    <recommendedName>
        <fullName evidence="2">Small ribosomal subunit protein uS12c</fullName>
    </recommendedName>
    <alternativeName>
        <fullName>30S ribosomal protein S12, chloroplastic</fullName>
    </alternativeName>
</protein>
<proteinExistence type="inferred from homology"/>
<dbReference type="EMBL" id="AF166114">
    <property type="protein sequence ID" value="AAF43858.1"/>
    <property type="molecule type" value="Genomic_DNA"/>
</dbReference>
<dbReference type="RefSeq" id="NP_038418.1">
    <property type="nucleotide sequence ID" value="NC_002186.1"/>
</dbReference>
<dbReference type="SMR" id="Q9MUP2"/>
<dbReference type="GeneID" id="800941"/>
<dbReference type="GO" id="GO:0009507">
    <property type="term" value="C:chloroplast"/>
    <property type="evidence" value="ECO:0007669"/>
    <property type="project" value="UniProtKB-SubCell"/>
</dbReference>
<dbReference type="GO" id="GO:0015935">
    <property type="term" value="C:small ribosomal subunit"/>
    <property type="evidence" value="ECO:0007669"/>
    <property type="project" value="InterPro"/>
</dbReference>
<dbReference type="GO" id="GO:0019843">
    <property type="term" value="F:rRNA binding"/>
    <property type="evidence" value="ECO:0007669"/>
    <property type="project" value="UniProtKB-UniRule"/>
</dbReference>
<dbReference type="GO" id="GO:0003735">
    <property type="term" value="F:structural constituent of ribosome"/>
    <property type="evidence" value="ECO:0007669"/>
    <property type="project" value="InterPro"/>
</dbReference>
<dbReference type="GO" id="GO:0006412">
    <property type="term" value="P:translation"/>
    <property type="evidence" value="ECO:0007669"/>
    <property type="project" value="UniProtKB-UniRule"/>
</dbReference>
<dbReference type="CDD" id="cd03368">
    <property type="entry name" value="Ribosomal_S12"/>
    <property type="match status" value="1"/>
</dbReference>
<dbReference type="FunFam" id="2.40.50.140:FF:000001">
    <property type="entry name" value="30S ribosomal protein S12"/>
    <property type="match status" value="1"/>
</dbReference>
<dbReference type="Gene3D" id="2.40.50.140">
    <property type="entry name" value="Nucleic acid-binding proteins"/>
    <property type="match status" value="1"/>
</dbReference>
<dbReference type="HAMAP" id="MF_00403_B">
    <property type="entry name" value="Ribosomal_uS12_B"/>
    <property type="match status" value="1"/>
</dbReference>
<dbReference type="InterPro" id="IPR012340">
    <property type="entry name" value="NA-bd_OB-fold"/>
</dbReference>
<dbReference type="InterPro" id="IPR006032">
    <property type="entry name" value="Ribosomal_uS12"/>
</dbReference>
<dbReference type="InterPro" id="IPR005679">
    <property type="entry name" value="Ribosomal_uS12_bac"/>
</dbReference>
<dbReference type="NCBIfam" id="TIGR00981">
    <property type="entry name" value="rpsL_bact"/>
    <property type="match status" value="1"/>
</dbReference>
<dbReference type="PANTHER" id="PTHR11652">
    <property type="entry name" value="30S RIBOSOMAL PROTEIN S12 FAMILY MEMBER"/>
    <property type="match status" value="1"/>
</dbReference>
<dbReference type="Pfam" id="PF00164">
    <property type="entry name" value="Ribosom_S12_S23"/>
    <property type="match status" value="1"/>
</dbReference>
<dbReference type="PIRSF" id="PIRSF002133">
    <property type="entry name" value="Ribosomal_S12/S23"/>
    <property type="match status" value="1"/>
</dbReference>
<dbReference type="PRINTS" id="PR01034">
    <property type="entry name" value="RIBOSOMALS12"/>
</dbReference>
<dbReference type="SUPFAM" id="SSF50249">
    <property type="entry name" value="Nucleic acid-binding proteins"/>
    <property type="match status" value="1"/>
</dbReference>
<dbReference type="PROSITE" id="PS00055">
    <property type="entry name" value="RIBOSOMAL_S12"/>
    <property type="match status" value="1"/>
</dbReference>
<name>RR12_MESVI</name>
<sequence length="122" mass="13709">MPTIQQLIRSERKRVYNKTKSPALKACPQRRGVCTRVYTTTPKKPNSALRKVARVRLTSGFEVTAYIPGIGHNLQEHSVVLIRGGRVKDLPGVRYHIIRGILDTAGVKDRAQSRSKYGVKRS</sequence>
<geneLocation type="chloroplast"/>
<keyword id="KW-0150">Chloroplast</keyword>
<keyword id="KW-0934">Plastid</keyword>
<keyword id="KW-0687">Ribonucleoprotein</keyword>
<keyword id="KW-0689">Ribosomal protein</keyword>
<keyword id="KW-0694">RNA-binding</keyword>
<keyword id="KW-0699">rRNA-binding</keyword>
<organism>
    <name type="scientific">Mesostigma viride</name>
    <name type="common">Green alga</name>
    <dbReference type="NCBI Taxonomy" id="41882"/>
    <lineage>
        <taxon>Eukaryota</taxon>
        <taxon>Viridiplantae</taxon>
        <taxon>Streptophyta</taxon>
        <taxon>Mesostigmatophyceae</taxon>
        <taxon>Mesostigmatales</taxon>
        <taxon>Mesostigmataceae</taxon>
        <taxon>Mesostigma</taxon>
    </lineage>
</organism>
<gene>
    <name type="primary">rps12</name>
</gene>
<comment type="function">
    <text evidence="1">With S4 and S5 plays an important role in translational accuracy. Located at the interface of the 30S and 50S subunits (By similarity).</text>
</comment>
<comment type="subunit">
    <text evidence="1">Part of the 30S ribosomal subunit.</text>
</comment>
<comment type="subcellular location">
    <subcellularLocation>
        <location>Plastid</location>
        <location>Chloroplast</location>
    </subcellularLocation>
</comment>
<comment type="similarity">
    <text evidence="2">Belongs to the universal ribosomal protein uS12 family.</text>
</comment>